<evidence type="ECO:0000250" key="1">
    <source>
        <dbReference type="UniProtKB" id="P77247"/>
    </source>
</evidence>
<evidence type="ECO:0000250" key="2">
    <source>
        <dbReference type="UniProtKB" id="Q8CHP8"/>
    </source>
</evidence>
<evidence type="ECO:0000305" key="3"/>
<comment type="cofactor">
    <cofactor evidence="1">
        <name>a divalent metal cation</name>
        <dbReference type="ChEBI" id="CHEBI:60240"/>
    </cofactor>
</comment>
<comment type="similarity">
    <text evidence="3">Belongs to the HAD-like hydrolase superfamily. CbbY/CbbZ/Gph/YieH family.</text>
</comment>
<protein>
    <recommendedName>
        <fullName evidence="3">Putative phosphatase YhcW</fullName>
        <ecNumber evidence="3">3.1.3.-</ecNumber>
    </recommendedName>
</protein>
<reference key="1">
    <citation type="journal article" date="1996" name="Microbiology">
        <title>A 22 kb DNA sequence in the cspB-glpPFKD region at 75 degrees on the Bacillus subtilis chromosome.</title>
        <authorList>
            <person name="Noback M.A."/>
            <person name="Terpstra P."/>
            <person name="Holsappel S."/>
            <person name="Venema G."/>
            <person name="Bron S."/>
        </authorList>
    </citation>
    <scope>NUCLEOTIDE SEQUENCE [GENOMIC DNA]</scope>
    <source>
        <strain>168</strain>
    </source>
</reference>
<reference key="2">
    <citation type="journal article" date="1997" name="Nature">
        <title>The complete genome sequence of the Gram-positive bacterium Bacillus subtilis.</title>
        <authorList>
            <person name="Kunst F."/>
            <person name="Ogasawara N."/>
            <person name="Moszer I."/>
            <person name="Albertini A.M."/>
            <person name="Alloni G."/>
            <person name="Azevedo V."/>
            <person name="Bertero M.G."/>
            <person name="Bessieres P."/>
            <person name="Bolotin A."/>
            <person name="Borchert S."/>
            <person name="Borriss R."/>
            <person name="Boursier L."/>
            <person name="Brans A."/>
            <person name="Braun M."/>
            <person name="Brignell S.C."/>
            <person name="Bron S."/>
            <person name="Brouillet S."/>
            <person name="Bruschi C.V."/>
            <person name="Caldwell B."/>
            <person name="Capuano V."/>
            <person name="Carter N.M."/>
            <person name="Choi S.-K."/>
            <person name="Codani J.-J."/>
            <person name="Connerton I.F."/>
            <person name="Cummings N.J."/>
            <person name="Daniel R.A."/>
            <person name="Denizot F."/>
            <person name="Devine K.M."/>
            <person name="Duesterhoeft A."/>
            <person name="Ehrlich S.D."/>
            <person name="Emmerson P.T."/>
            <person name="Entian K.-D."/>
            <person name="Errington J."/>
            <person name="Fabret C."/>
            <person name="Ferrari E."/>
            <person name="Foulger D."/>
            <person name="Fritz C."/>
            <person name="Fujita M."/>
            <person name="Fujita Y."/>
            <person name="Fuma S."/>
            <person name="Galizzi A."/>
            <person name="Galleron N."/>
            <person name="Ghim S.-Y."/>
            <person name="Glaser P."/>
            <person name="Goffeau A."/>
            <person name="Golightly E.J."/>
            <person name="Grandi G."/>
            <person name="Guiseppi G."/>
            <person name="Guy B.J."/>
            <person name="Haga K."/>
            <person name="Haiech J."/>
            <person name="Harwood C.R."/>
            <person name="Henaut A."/>
            <person name="Hilbert H."/>
            <person name="Holsappel S."/>
            <person name="Hosono S."/>
            <person name="Hullo M.-F."/>
            <person name="Itaya M."/>
            <person name="Jones L.-M."/>
            <person name="Joris B."/>
            <person name="Karamata D."/>
            <person name="Kasahara Y."/>
            <person name="Klaerr-Blanchard M."/>
            <person name="Klein C."/>
            <person name="Kobayashi Y."/>
            <person name="Koetter P."/>
            <person name="Koningstein G."/>
            <person name="Krogh S."/>
            <person name="Kumano M."/>
            <person name="Kurita K."/>
            <person name="Lapidus A."/>
            <person name="Lardinois S."/>
            <person name="Lauber J."/>
            <person name="Lazarevic V."/>
            <person name="Lee S.-M."/>
            <person name="Levine A."/>
            <person name="Liu H."/>
            <person name="Masuda S."/>
            <person name="Mauel C."/>
            <person name="Medigue C."/>
            <person name="Medina N."/>
            <person name="Mellado R.P."/>
            <person name="Mizuno M."/>
            <person name="Moestl D."/>
            <person name="Nakai S."/>
            <person name="Noback M."/>
            <person name="Noone D."/>
            <person name="O'Reilly M."/>
            <person name="Ogawa K."/>
            <person name="Ogiwara A."/>
            <person name="Oudega B."/>
            <person name="Park S.-H."/>
            <person name="Parro V."/>
            <person name="Pohl T.M."/>
            <person name="Portetelle D."/>
            <person name="Porwollik S."/>
            <person name="Prescott A.M."/>
            <person name="Presecan E."/>
            <person name="Pujic P."/>
            <person name="Purnelle B."/>
            <person name="Rapoport G."/>
            <person name="Rey M."/>
            <person name="Reynolds S."/>
            <person name="Rieger M."/>
            <person name="Rivolta C."/>
            <person name="Rocha E."/>
            <person name="Roche B."/>
            <person name="Rose M."/>
            <person name="Sadaie Y."/>
            <person name="Sato T."/>
            <person name="Scanlan E."/>
            <person name="Schleich S."/>
            <person name="Schroeter R."/>
            <person name="Scoffone F."/>
            <person name="Sekiguchi J."/>
            <person name="Sekowska A."/>
            <person name="Seror S.J."/>
            <person name="Serror P."/>
            <person name="Shin B.-S."/>
            <person name="Soldo B."/>
            <person name="Sorokin A."/>
            <person name="Tacconi E."/>
            <person name="Takagi T."/>
            <person name="Takahashi H."/>
            <person name="Takemaru K."/>
            <person name="Takeuchi M."/>
            <person name="Tamakoshi A."/>
            <person name="Tanaka T."/>
            <person name="Terpstra P."/>
            <person name="Tognoni A."/>
            <person name="Tosato V."/>
            <person name="Uchiyama S."/>
            <person name="Vandenbol M."/>
            <person name="Vannier F."/>
            <person name="Vassarotti A."/>
            <person name="Viari A."/>
            <person name="Wambutt R."/>
            <person name="Wedler E."/>
            <person name="Wedler H."/>
            <person name="Weitzenegger T."/>
            <person name="Winters P."/>
            <person name="Wipat A."/>
            <person name="Yamamoto H."/>
            <person name="Yamane K."/>
            <person name="Yasumoto K."/>
            <person name="Yata K."/>
            <person name="Yoshida K."/>
            <person name="Yoshikawa H.-F."/>
            <person name="Zumstein E."/>
            <person name="Yoshikawa H."/>
            <person name="Danchin A."/>
        </authorList>
    </citation>
    <scope>NUCLEOTIDE SEQUENCE [LARGE SCALE GENOMIC DNA]</scope>
    <source>
        <strain>168</strain>
    </source>
</reference>
<proteinExistence type="inferred from homology"/>
<accession>P54607</accession>
<organism>
    <name type="scientific">Bacillus subtilis (strain 168)</name>
    <dbReference type="NCBI Taxonomy" id="224308"/>
    <lineage>
        <taxon>Bacteria</taxon>
        <taxon>Bacillati</taxon>
        <taxon>Bacillota</taxon>
        <taxon>Bacilli</taxon>
        <taxon>Bacillales</taxon>
        <taxon>Bacillaceae</taxon>
        <taxon>Bacillus</taxon>
    </lineage>
</organism>
<dbReference type="EC" id="3.1.3.-" evidence="3"/>
<dbReference type="EMBL" id="X96983">
    <property type="protein sequence ID" value="CAA65707.1"/>
    <property type="molecule type" value="Genomic_DNA"/>
</dbReference>
<dbReference type="EMBL" id="AL009126">
    <property type="protein sequence ID" value="CAB12752.1"/>
    <property type="molecule type" value="Genomic_DNA"/>
</dbReference>
<dbReference type="PIR" id="C69824">
    <property type="entry name" value="C69824"/>
</dbReference>
<dbReference type="RefSeq" id="WP_003245030.1">
    <property type="nucleotide sequence ID" value="NZ_OZ025638.1"/>
</dbReference>
<dbReference type="SMR" id="P54607"/>
<dbReference type="FunCoup" id="P54607">
    <property type="interactions" value="666"/>
</dbReference>
<dbReference type="STRING" id="224308.BSU09240"/>
<dbReference type="PaxDb" id="224308-BSU09240"/>
<dbReference type="DNASU" id="936244"/>
<dbReference type="EnsemblBacteria" id="CAB12752">
    <property type="protein sequence ID" value="CAB12752"/>
    <property type="gene ID" value="BSU_09240"/>
</dbReference>
<dbReference type="GeneID" id="936244"/>
<dbReference type="KEGG" id="bsu:BSU09240"/>
<dbReference type="PATRIC" id="fig|224308.179.peg.996"/>
<dbReference type="eggNOG" id="COG0637">
    <property type="taxonomic scope" value="Bacteria"/>
</dbReference>
<dbReference type="InParanoid" id="P54607"/>
<dbReference type="OrthoDB" id="9797743at2"/>
<dbReference type="PhylomeDB" id="P54607"/>
<dbReference type="BioCyc" id="BSUB:BSU09240-MONOMER"/>
<dbReference type="Proteomes" id="UP000001570">
    <property type="component" value="Chromosome"/>
</dbReference>
<dbReference type="GO" id="GO:0016787">
    <property type="term" value="F:hydrolase activity"/>
    <property type="evidence" value="ECO:0007669"/>
    <property type="project" value="UniProtKB-KW"/>
</dbReference>
<dbReference type="GO" id="GO:0046872">
    <property type="term" value="F:metal ion binding"/>
    <property type="evidence" value="ECO:0007669"/>
    <property type="project" value="UniProtKB-KW"/>
</dbReference>
<dbReference type="CDD" id="cd16423">
    <property type="entry name" value="HAD_BPGM-like"/>
    <property type="match status" value="1"/>
</dbReference>
<dbReference type="FunFam" id="3.40.50.1000:FF:000036">
    <property type="entry name" value="HAD family hydrolase"/>
    <property type="match status" value="1"/>
</dbReference>
<dbReference type="Gene3D" id="3.40.50.1000">
    <property type="entry name" value="HAD superfamily/HAD-like"/>
    <property type="match status" value="1"/>
</dbReference>
<dbReference type="Gene3D" id="1.10.150.240">
    <property type="entry name" value="Putative phosphatase, domain 2"/>
    <property type="match status" value="1"/>
</dbReference>
<dbReference type="InterPro" id="IPR036412">
    <property type="entry name" value="HAD-like_sf"/>
</dbReference>
<dbReference type="InterPro" id="IPR006439">
    <property type="entry name" value="HAD-SF_hydro_IA"/>
</dbReference>
<dbReference type="InterPro" id="IPR041492">
    <property type="entry name" value="HAD_2"/>
</dbReference>
<dbReference type="InterPro" id="IPR023214">
    <property type="entry name" value="HAD_sf"/>
</dbReference>
<dbReference type="InterPro" id="IPR023198">
    <property type="entry name" value="PGP-like_dom2"/>
</dbReference>
<dbReference type="NCBIfam" id="TIGR01509">
    <property type="entry name" value="HAD-SF-IA-v3"/>
    <property type="match status" value="1"/>
</dbReference>
<dbReference type="PANTHER" id="PTHR18901">
    <property type="entry name" value="2-DEOXYGLUCOSE-6-PHOSPHATE PHOSPHATASE 2"/>
    <property type="match status" value="1"/>
</dbReference>
<dbReference type="PANTHER" id="PTHR18901:SF38">
    <property type="entry name" value="PSEUDOURIDINE-5'-PHOSPHATASE"/>
    <property type="match status" value="1"/>
</dbReference>
<dbReference type="Pfam" id="PF13419">
    <property type="entry name" value="HAD_2"/>
    <property type="match status" value="1"/>
</dbReference>
<dbReference type="PRINTS" id="PR00413">
    <property type="entry name" value="HADHALOGNASE"/>
</dbReference>
<dbReference type="SFLD" id="SFLDG01135">
    <property type="entry name" value="C1.5.6:_HAD__Beta-PGM__Phospha"/>
    <property type="match status" value="1"/>
</dbReference>
<dbReference type="SFLD" id="SFLDG01129">
    <property type="entry name" value="C1.5:_HAD__Beta-PGM__Phosphata"/>
    <property type="match status" value="1"/>
</dbReference>
<dbReference type="SUPFAM" id="SSF56784">
    <property type="entry name" value="HAD-like"/>
    <property type="match status" value="1"/>
</dbReference>
<gene>
    <name type="primary">yhcW</name>
    <name type="ordered locus">BSU09240</name>
</gene>
<sequence>MIKALIFDFDGLILDTETHEYEVLQEIFEEHGSVLPLSVWGKVIGTAAGFRPFEYLEEQIGKKLNHEELTQLRRERFAKRMESEKARPGVEAYLNAAKDLGLKIGLASSSDYKWVSGHLKQIGLFDDFEVIQTADDVEEVKPNPELYLLAAKNLGVSPAECLAFEDSVNGSIAAKRAGMKCVIVPNKVTGTLMFEDYDHRLESMAEMELALLLDHLNSQN</sequence>
<keyword id="KW-0378">Hydrolase</keyword>
<keyword id="KW-0479">Metal-binding</keyword>
<keyword id="KW-1185">Reference proteome</keyword>
<feature type="chain" id="PRO_0000108058" description="Putative phosphatase YhcW">
    <location>
        <begin position="1"/>
        <end position="220"/>
    </location>
</feature>
<feature type="active site" description="Nucleophile" evidence="2">
    <location>
        <position position="8"/>
    </location>
</feature>
<feature type="active site" description="Proton donor" evidence="2">
    <location>
        <position position="10"/>
    </location>
</feature>
<feature type="binding site" evidence="1">
    <location>
        <position position="8"/>
    </location>
    <ligand>
        <name>a divalent metal cation</name>
        <dbReference type="ChEBI" id="CHEBI:60240"/>
    </ligand>
</feature>
<feature type="binding site" evidence="1">
    <location>
        <position position="10"/>
    </location>
    <ligand>
        <name>a divalent metal cation</name>
        <dbReference type="ChEBI" id="CHEBI:60240"/>
    </ligand>
</feature>
<feature type="binding site" evidence="1">
    <location>
        <position position="166"/>
    </location>
    <ligand>
        <name>a divalent metal cation</name>
        <dbReference type="ChEBI" id="CHEBI:60240"/>
    </ligand>
</feature>
<name>YHCW_BACSU</name>